<feature type="chain" id="PRO_0000433322" description="RHOMBOID-like protein 1">
    <location>
        <begin position="1"/>
        <end position="389"/>
    </location>
</feature>
<feature type="transmembrane region" description="Helical" evidence="3">
    <location>
        <begin position="56"/>
        <end position="76"/>
    </location>
</feature>
<feature type="transmembrane region" description="Helical" evidence="3">
    <location>
        <begin position="136"/>
        <end position="156"/>
    </location>
</feature>
<feature type="transmembrane region" description="Helical" evidence="3">
    <location>
        <begin position="163"/>
        <end position="183"/>
    </location>
</feature>
<feature type="transmembrane region" description="Helical" evidence="3">
    <location>
        <begin position="191"/>
        <end position="211"/>
    </location>
</feature>
<feature type="transmembrane region" description="Helical" evidence="3">
    <location>
        <begin position="221"/>
        <end position="241"/>
    </location>
</feature>
<feature type="transmembrane region" description="Helical" evidence="3">
    <location>
        <begin position="244"/>
        <end position="264"/>
    </location>
</feature>
<feature type="transmembrane region" description="Helical" evidence="3">
    <location>
        <begin position="295"/>
        <end position="315"/>
    </location>
</feature>
<feature type="active site" description="Nucleophile" evidence="1">
    <location>
        <position position="196"/>
    </location>
</feature>
<feature type="active site" description="Charge relay system" evidence="1">
    <location>
        <position position="248"/>
    </location>
</feature>
<feature type="splice variant" id="VSP_057727" description="In isoform 2.">
    <original>K</original>
    <variation>KVAKSSLVKQAALSMNDVSIMSLVFLHLQ</variation>
    <location>
        <position position="220"/>
    </location>
</feature>
<feature type="splice variant" id="VSP_057728" description="In isoform 2.">
    <original>AGLVVLLRG</original>
    <variation>SFSFIMITK</variation>
    <location>
        <begin position="310"/>
        <end position="318"/>
    </location>
</feature>
<feature type="splice variant" id="VSP_057729" description="In isoform 2.">
    <location>
        <begin position="319"/>
        <end position="389"/>
    </location>
</feature>
<keyword id="KW-0025">Alternative splicing</keyword>
<keyword id="KW-0333">Golgi apparatus</keyword>
<keyword id="KW-0378">Hydrolase</keyword>
<keyword id="KW-0472">Membrane</keyword>
<keyword id="KW-0645">Protease</keyword>
<keyword id="KW-1185">Reference proteome</keyword>
<keyword id="KW-0720">Serine protease</keyword>
<keyword id="KW-0812">Transmembrane</keyword>
<keyword id="KW-1133">Transmembrane helix</keyword>
<dbReference type="EC" id="3.4.21.105" evidence="2"/>
<dbReference type="EMBL" id="AB195672">
    <property type="protein sequence ID" value="BAE46872.1"/>
    <property type="molecule type" value="mRNA"/>
</dbReference>
<dbReference type="EMBL" id="AC005315">
    <property type="protein sequence ID" value="AAC33231.1"/>
    <property type="status" value="ALT_SEQ"/>
    <property type="molecule type" value="Genomic_DNA"/>
</dbReference>
<dbReference type="EMBL" id="CP002685">
    <property type="protein sequence ID" value="AEC08202.1"/>
    <property type="molecule type" value="Genomic_DNA"/>
</dbReference>
<dbReference type="EMBL" id="CP002685">
    <property type="protein sequence ID" value="AEC08203.1"/>
    <property type="molecule type" value="Genomic_DNA"/>
</dbReference>
<dbReference type="EMBL" id="AK228551">
    <property type="protein sequence ID" value="BAF00472.1"/>
    <property type="molecule type" value="mRNA"/>
</dbReference>
<dbReference type="PIR" id="T02735">
    <property type="entry name" value="T02735"/>
</dbReference>
<dbReference type="RefSeq" id="NP_001077973.1">
    <molecule id="Q0WQX7-2"/>
    <property type="nucleotide sequence ID" value="NM_001084504.1"/>
</dbReference>
<dbReference type="RefSeq" id="NP_180469.3">
    <molecule id="Q0WQX7-1"/>
    <property type="nucleotide sequence ID" value="NM_128462.4"/>
</dbReference>
<dbReference type="SMR" id="Q0WQX7"/>
<dbReference type="FunCoup" id="Q0WQX7">
    <property type="interactions" value="139"/>
</dbReference>
<dbReference type="STRING" id="3702.Q0WQX7"/>
<dbReference type="MEROPS" id="S54.A05"/>
<dbReference type="PaxDb" id="3702-AT2G29050.1"/>
<dbReference type="ProteomicsDB" id="225972">
    <molecule id="Q0WQX7-1"/>
</dbReference>
<dbReference type="EnsemblPlants" id="AT2G29050.1">
    <molecule id="Q0WQX7-1"/>
    <property type="protein sequence ID" value="AT2G29050.1"/>
    <property type="gene ID" value="AT2G29050"/>
</dbReference>
<dbReference type="EnsemblPlants" id="AT2G29050.2">
    <molecule id="Q0WQX7-2"/>
    <property type="protein sequence ID" value="AT2G29050.2"/>
    <property type="gene ID" value="AT2G29050"/>
</dbReference>
<dbReference type="GeneID" id="817453"/>
<dbReference type="Gramene" id="AT2G29050.1">
    <molecule id="Q0WQX7-1"/>
    <property type="protein sequence ID" value="AT2G29050.1"/>
    <property type="gene ID" value="AT2G29050"/>
</dbReference>
<dbReference type="Gramene" id="AT2G29050.2">
    <molecule id="Q0WQX7-2"/>
    <property type="protein sequence ID" value="AT2G29050.2"/>
    <property type="gene ID" value="AT2G29050"/>
</dbReference>
<dbReference type="KEGG" id="ath:AT2G29050"/>
<dbReference type="Araport" id="AT2G29050"/>
<dbReference type="TAIR" id="AT2G29050">
    <property type="gene designation" value="RBL1"/>
</dbReference>
<dbReference type="eggNOG" id="KOG2289">
    <property type="taxonomic scope" value="Eukaryota"/>
</dbReference>
<dbReference type="InParanoid" id="Q0WQX7"/>
<dbReference type="OMA" id="TSLWSCN"/>
<dbReference type="OrthoDB" id="418595at2759"/>
<dbReference type="PhylomeDB" id="Q0WQX7"/>
<dbReference type="PRO" id="PR:Q0WQX7"/>
<dbReference type="Proteomes" id="UP000006548">
    <property type="component" value="Chromosome 2"/>
</dbReference>
<dbReference type="ExpressionAtlas" id="Q0WQX7">
    <property type="expression patterns" value="baseline and differential"/>
</dbReference>
<dbReference type="GO" id="GO:0005794">
    <property type="term" value="C:Golgi apparatus"/>
    <property type="evidence" value="ECO:0000314"/>
    <property type="project" value="TAIR"/>
</dbReference>
<dbReference type="GO" id="GO:0000139">
    <property type="term" value="C:Golgi membrane"/>
    <property type="evidence" value="ECO:0007669"/>
    <property type="project" value="UniProtKB-SubCell"/>
</dbReference>
<dbReference type="GO" id="GO:0004252">
    <property type="term" value="F:serine-type endopeptidase activity"/>
    <property type="evidence" value="ECO:0007669"/>
    <property type="project" value="InterPro"/>
</dbReference>
<dbReference type="GO" id="GO:0006508">
    <property type="term" value="P:proteolysis"/>
    <property type="evidence" value="ECO:0007669"/>
    <property type="project" value="UniProtKB-KW"/>
</dbReference>
<dbReference type="FunFam" id="1.20.1540.10:FF:000019">
    <property type="entry name" value="RHOMBOID-like protein"/>
    <property type="match status" value="1"/>
</dbReference>
<dbReference type="Gene3D" id="1.20.1540.10">
    <property type="entry name" value="Rhomboid-like"/>
    <property type="match status" value="1"/>
</dbReference>
<dbReference type="InterPro" id="IPR002610">
    <property type="entry name" value="Peptidase_S54_rhomboid-like"/>
</dbReference>
<dbReference type="InterPro" id="IPR022764">
    <property type="entry name" value="Peptidase_S54_rhomboid_dom"/>
</dbReference>
<dbReference type="InterPro" id="IPR035952">
    <property type="entry name" value="Rhomboid-like_sf"/>
</dbReference>
<dbReference type="PANTHER" id="PTHR22936:SF77">
    <property type="entry name" value="RHOMBOID-LIKE PROTEIN 1"/>
    <property type="match status" value="1"/>
</dbReference>
<dbReference type="PANTHER" id="PTHR22936">
    <property type="entry name" value="RHOMBOID-RELATED"/>
    <property type="match status" value="1"/>
</dbReference>
<dbReference type="Pfam" id="PF01694">
    <property type="entry name" value="Rhomboid"/>
    <property type="match status" value="1"/>
</dbReference>
<dbReference type="SUPFAM" id="SSF144091">
    <property type="entry name" value="Rhomboid-like"/>
    <property type="match status" value="1"/>
</dbReference>
<accession>Q0WQX7</accession>
<accession>O81073</accession>
<accession>Q3C2H8</accession>
<comment type="function">
    <text evidence="4">Probable rhomboid-type serine protease that catalyzes intramembrane proteolysis. Unable to cleave the Drosophila protein Spitz.</text>
</comment>
<comment type="catalytic activity">
    <reaction evidence="2">
        <text>Cleaves type-1 transmembrane domains using a catalytic dyad composed of serine and histidine that are contributed by different transmembrane domains.</text>
        <dbReference type="EC" id="3.4.21.105"/>
    </reaction>
</comment>
<comment type="subcellular location">
    <subcellularLocation>
        <location evidence="4">Golgi apparatus membrane</location>
        <topology evidence="3">Multi-pass membrane protein</topology>
    </subcellularLocation>
</comment>
<comment type="alternative products">
    <event type="alternative splicing"/>
    <isoform>
        <id>Q0WQX7-1</id>
        <name>1</name>
        <sequence type="displayed"/>
    </isoform>
    <isoform>
        <id>Q0WQX7-2</id>
        <name>2</name>
        <sequence type="described" ref="VSP_057727 VSP_057728 VSP_057729"/>
    </isoform>
</comment>
<comment type="tissue specificity">
    <text evidence="4">Expressed in roots, seedlings, leaves, stems and flowers.</text>
</comment>
<comment type="disruption phenotype">
    <text evidence="8">No visible phenotype.</text>
</comment>
<comment type="similarity">
    <text evidence="7">Belongs to the peptidase S54 family.</text>
</comment>
<comment type="sequence caution" evidence="7">
    <conflict type="erroneous gene model prediction">
        <sequence resource="EMBL-CDS" id="AAC33231"/>
    </conflict>
</comment>
<protein>
    <recommendedName>
        <fullName evidence="5 6">RHOMBOID-like protein 1</fullName>
        <shortName evidence="5 6">AtRBL1</shortName>
        <ecNumber evidence="2">3.4.21.105</ecNumber>
    </recommendedName>
</protein>
<gene>
    <name evidence="5 6" type="primary">RBL1</name>
    <name evidence="9" type="ordered locus">At2g29050</name>
    <name evidence="10" type="ORF">T9I4.13</name>
</gene>
<reference key="1">
    <citation type="journal article" date="2005" name="FEBS Lett.">
        <title>An Arabidopsis Rhomboid homolog is an intramembrane protease in plants.</title>
        <authorList>
            <person name="Kanaoka M.M."/>
            <person name="Urban S."/>
            <person name="Freeman M."/>
            <person name="Okada K."/>
        </authorList>
    </citation>
    <scope>NUCLEOTIDE SEQUENCE [MRNA] (ISOFORM 2)</scope>
    <scope>GENE FAMILY</scope>
    <scope>NOMENCLATURE</scope>
    <scope>TISSUE SPECIFICITY</scope>
    <scope>SUBCELLULAR LOCATION</scope>
    <scope>DISRUPTION PHENOTYPE</scope>
    <scope>FUNCTION</scope>
    <source>
        <strain>cv. Columbia</strain>
    </source>
</reference>
<reference key="2">
    <citation type="journal article" date="1999" name="Nature">
        <title>Sequence and analysis of chromosome 2 of the plant Arabidopsis thaliana.</title>
        <authorList>
            <person name="Lin X."/>
            <person name="Kaul S."/>
            <person name="Rounsley S.D."/>
            <person name="Shea T.P."/>
            <person name="Benito M.-I."/>
            <person name="Town C.D."/>
            <person name="Fujii C.Y."/>
            <person name="Mason T.M."/>
            <person name="Bowman C.L."/>
            <person name="Barnstead M.E."/>
            <person name="Feldblyum T.V."/>
            <person name="Buell C.R."/>
            <person name="Ketchum K.A."/>
            <person name="Lee J.J."/>
            <person name="Ronning C.M."/>
            <person name="Koo H.L."/>
            <person name="Moffat K.S."/>
            <person name="Cronin L.A."/>
            <person name="Shen M."/>
            <person name="Pai G."/>
            <person name="Van Aken S."/>
            <person name="Umayam L."/>
            <person name="Tallon L.J."/>
            <person name="Gill J.E."/>
            <person name="Adams M.D."/>
            <person name="Carrera A.J."/>
            <person name="Creasy T.H."/>
            <person name="Goodman H.M."/>
            <person name="Somerville C.R."/>
            <person name="Copenhaver G.P."/>
            <person name="Preuss D."/>
            <person name="Nierman W.C."/>
            <person name="White O."/>
            <person name="Eisen J.A."/>
            <person name="Salzberg S.L."/>
            <person name="Fraser C.M."/>
            <person name="Venter J.C."/>
        </authorList>
    </citation>
    <scope>NUCLEOTIDE SEQUENCE [LARGE SCALE GENOMIC DNA]</scope>
    <source>
        <strain>cv. Columbia</strain>
    </source>
</reference>
<reference key="3">
    <citation type="journal article" date="2017" name="Plant J.">
        <title>Araport11: a complete reannotation of the Arabidopsis thaliana reference genome.</title>
        <authorList>
            <person name="Cheng C.Y."/>
            <person name="Krishnakumar V."/>
            <person name="Chan A.P."/>
            <person name="Thibaud-Nissen F."/>
            <person name="Schobel S."/>
            <person name="Town C.D."/>
        </authorList>
    </citation>
    <scope>GENOME REANNOTATION</scope>
    <source>
        <strain>cv. Columbia</strain>
    </source>
</reference>
<reference key="4">
    <citation type="submission" date="2006-07" db="EMBL/GenBank/DDBJ databases">
        <title>Large-scale analysis of RIKEN Arabidopsis full-length (RAFL) cDNAs.</title>
        <authorList>
            <person name="Totoki Y."/>
            <person name="Seki M."/>
            <person name="Ishida J."/>
            <person name="Nakajima M."/>
            <person name="Enju A."/>
            <person name="Kamiya A."/>
            <person name="Narusaka M."/>
            <person name="Shin-i T."/>
            <person name="Nakagawa M."/>
            <person name="Sakamoto N."/>
            <person name="Oishi K."/>
            <person name="Kohara Y."/>
            <person name="Kobayashi M."/>
            <person name="Toyoda A."/>
            <person name="Sakaki Y."/>
            <person name="Sakurai T."/>
            <person name="Iida K."/>
            <person name="Akiyama K."/>
            <person name="Satou M."/>
            <person name="Toyoda T."/>
            <person name="Konagaya A."/>
            <person name="Carninci P."/>
            <person name="Kawai J."/>
            <person name="Hayashizaki Y."/>
            <person name="Shinozaki K."/>
        </authorList>
    </citation>
    <scope>NUCLEOTIDE SEQUENCE [LARGE SCALE MRNA] (ISOFORM 1)</scope>
    <source>
        <strain>cv. Columbia</strain>
    </source>
</reference>
<reference key="5">
    <citation type="journal article" date="2006" name="BMC Genomics">
        <title>Cross genome comparisons of serine proteases in Arabidopsis and rice.</title>
        <authorList>
            <person name="Tripathi L.P."/>
            <person name="Sowdhamini R."/>
        </authorList>
    </citation>
    <scope>GENE FAMILY</scope>
    <scope>NOMENCLATURE</scope>
</reference>
<reference key="6">
    <citation type="journal article" date="2006" name="BMC Plant Biol.">
        <title>Protease gene families in Populus and Arabidopsis.</title>
        <authorList>
            <person name="Garcia-Lorenzo M."/>
            <person name="Sjodin A."/>
            <person name="Jansson S."/>
            <person name="Funk C."/>
        </authorList>
    </citation>
    <scope>GENE FAMILY</scope>
    <scope>NOMENCLATURE</scope>
</reference>
<reference key="7">
    <citation type="journal article" date="2007" name="Genome Res.">
        <title>Functional and evolutionary implications of enhanced genomic analysis of rhomboid intramembrane proteases.</title>
        <authorList>
            <person name="Lemberg M.K."/>
            <person name="Freeman M."/>
        </authorList>
    </citation>
    <scope>GENE FAMILY</scope>
    <scope>NOMENCLATURE</scope>
</reference>
<reference key="8">
    <citation type="journal article" date="2012" name="Physiol. Plantarum">
        <title>Rhomboid proteases in plants - still in square one?</title>
        <authorList>
            <person name="Knopf R.R."/>
            <person name="Adam Z."/>
        </authorList>
    </citation>
    <scope>REVIEW</scope>
</reference>
<organism evidence="11">
    <name type="scientific">Arabidopsis thaliana</name>
    <name type="common">Mouse-ear cress</name>
    <dbReference type="NCBI Taxonomy" id="3702"/>
    <lineage>
        <taxon>Eukaryota</taxon>
        <taxon>Viridiplantae</taxon>
        <taxon>Streptophyta</taxon>
        <taxon>Embryophyta</taxon>
        <taxon>Tracheophyta</taxon>
        <taxon>Spermatophyta</taxon>
        <taxon>Magnoliopsida</taxon>
        <taxon>eudicotyledons</taxon>
        <taxon>Gunneridae</taxon>
        <taxon>Pentapetalae</taxon>
        <taxon>rosids</taxon>
        <taxon>malvids</taxon>
        <taxon>Brassicales</taxon>
        <taxon>Brassicaceae</taxon>
        <taxon>Camelineae</taxon>
        <taxon>Arabidopsis</taxon>
    </lineage>
</organism>
<sequence>MARDRREGLEIKVVNPPAAATNNVAVETSPATATRRRRQQQRASFAEFRPFKLWFPWLVPAIVVANIALFAISMFINNCPKNSAYCLARFLGRFAFQPMKENPLLGPSSLTLEKMGALDVSMVVHKHEVWRLFTCIWLHAGVFHVLANMLSLIFIGIRLEQEFGFVRIGLLYMISGFGGSLLSSLFNRAGISVGASGALFGLLGAMLSELLTNWTIYANKFAALLTLIFIIAINLAVGILPHVDNFAHLGGFTSGFLLGFVFLIRPQYGYFNQRNNPRGYAAPSAKSKHKPYQYVLWITSLVLLIAGYTAGLVVLLRGTDLNKHCSWCHYLSCIPTSLWSCKSQNVYCESSQIGQQMNLTCITNGKTEMYKLSNDIPSRIQQLCSQLCR</sequence>
<evidence type="ECO:0000250" key="1">
    <source>
        <dbReference type="UniProtKB" id="P54493"/>
    </source>
</evidence>
<evidence type="ECO:0000250" key="2">
    <source>
        <dbReference type="UniProtKB" id="Q9CAN1"/>
    </source>
</evidence>
<evidence type="ECO:0000255" key="3"/>
<evidence type="ECO:0000269" key="4">
    <source>
    </source>
</evidence>
<evidence type="ECO:0000303" key="5">
    <source>
    </source>
</evidence>
<evidence type="ECO:0000303" key="6">
    <source>
    </source>
</evidence>
<evidence type="ECO:0000305" key="7"/>
<evidence type="ECO:0000305" key="8">
    <source>
    </source>
</evidence>
<evidence type="ECO:0000312" key="9">
    <source>
        <dbReference type="Araport" id="AT2G29050"/>
    </source>
</evidence>
<evidence type="ECO:0000312" key="10">
    <source>
        <dbReference type="EMBL" id="AAC33231.1"/>
    </source>
</evidence>
<evidence type="ECO:0000312" key="11">
    <source>
        <dbReference type="EMBL" id="BAF00472.1"/>
    </source>
</evidence>
<name>RBL1_ARATH</name>
<proteinExistence type="evidence at transcript level"/>